<comment type="function">
    <text evidence="1">Probable sphingolipid transporter that plays a central role in endosomes and/or lysosomes storage.</text>
</comment>
<comment type="subcellular location">
    <subcellularLocation>
        <location evidence="1">Late endosome membrane</location>
        <topology evidence="1">Multi-pass membrane protein</topology>
    </subcellularLocation>
    <subcellularLocation>
        <location evidence="1">Lysosome membrane</location>
        <topology evidence="1">Multi-pass membrane protein</topology>
    </subcellularLocation>
</comment>
<comment type="similarity">
    <text evidence="5">Belongs to the major facilitator superfamily. Spinster (TC 2.A.1.49) family.</text>
</comment>
<organism>
    <name type="scientific">Arabidopsis thaliana</name>
    <name type="common">Mouse-ear cress</name>
    <dbReference type="NCBI Taxonomy" id="3702"/>
    <lineage>
        <taxon>Eukaryota</taxon>
        <taxon>Viridiplantae</taxon>
        <taxon>Streptophyta</taxon>
        <taxon>Embryophyta</taxon>
        <taxon>Tracheophyta</taxon>
        <taxon>Spermatophyta</taxon>
        <taxon>Magnoliopsida</taxon>
        <taxon>eudicotyledons</taxon>
        <taxon>Gunneridae</taxon>
        <taxon>Pentapetalae</taxon>
        <taxon>rosids</taxon>
        <taxon>malvids</taxon>
        <taxon>Brassicales</taxon>
        <taxon>Brassicaceae</taxon>
        <taxon>Camelineae</taxon>
        <taxon>Arabidopsis</taxon>
    </lineage>
</organism>
<protein>
    <recommendedName>
        <fullName>Probable sphingolipid transporter spinster homolog 2</fullName>
    </recommendedName>
</protein>
<accession>Q9FLG8</accession>
<sequence length="484" mass="52155">MDVDGEGDRGQNPRIMERDSDSIKDPISEPSWFTPKKLLFVFCVVNLINYIDRGAIASNGINGSRGSCTSSGTCSSGSGIQGDFNLSNFEDGVLSSAFMVGLLVASPIFASLAKSVNPFRLIGVGLSIWTLAVIGCGLSFDFWSITICRMFVGVGEASFVSLAAPFIDDNAPHDQKSAWLAVFYMCIPTGYAFGYVYGGVVGSVLPWRAAFWGEAILMLPFAVLGFVIKPLHLKGFAPDDTGKPRTDNLNVLPVGYGFSAVMKDLKLLLVDKVYVTNILGYIAYNFVLGAYSYWGPKAGYNIYKMENADMIFGGVTVVCGIVGTLSGGVILDYMDATISNAFKVLSVSTFIGAIFCFAAFCFKSMYAFLALFAVGELLVFATQGPVNFIVLHCVKPSLRPLAMAMSTVSIHIFGDVPSSPLVGVLQDYVNNWRVTSLVLTFVLFPAAAIWSIGIFLNSVDRYNEDSEPDAVTRESTAAPLLQEA</sequence>
<reference key="1">
    <citation type="journal article" date="1998" name="DNA Res.">
        <title>Structural analysis of Arabidopsis thaliana chromosome 5. IV. Sequence features of the regions of 1,456,315 bp covered by nineteen physically assigned P1 and TAC clones.</title>
        <authorList>
            <person name="Sato S."/>
            <person name="Kaneko T."/>
            <person name="Kotani H."/>
            <person name="Nakamura Y."/>
            <person name="Asamizu E."/>
            <person name="Miyajima N."/>
            <person name="Tabata S."/>
        </authorList>
    </citation>
    <scope>NUCLEOTIDE SEQUENCE [LARGE SCALE GENOMIC DNA]</scope>
    <source>
        <strain>cv. Columbia</strain>
    </source>
</reference>
<reference key="2">
    <citation type="submission" date="1999-04" db="EMBL/GenBank/DDBJ databases">
        <title>Structural analysis of Arabidopsis thaliana chromosome 5. XI.</title>
        <authorList>
            <person name="Kaneko T."/>
            <person name="Katoh T."/>
            <person name="Asamizu E."/>
            <person name="Sato S."/>
            <person name="Nakamura Y."/>
            <person name="Kotani H."/>
            <person name="Tabata S."/>
        </authorList>
    </citation>
    <scope>NUCLEOTIDE SEQUENCE [LARGE SCALE GENOMIC DNA]</scope>
    <source>
        <strain>cv. Columbia</strain>
    </source>
</reference>
<reference key="3">
    <citation type="journal article" date="2017" name="Plant J.">
        <title>Araport11: a complete reannotation of the Arabidopsis thaliana reference genome.</title>
        <authorList>
            <person name="Cheng C.Y."/>
            <person name="Krishnakumar V."/>
            <person name="Chan A.P."/>
            <person name="Thibaud-Nissen F."/>
            <person name="Schobel S."/>
            <person name="Town C.D."/>
        </authorList>
    </citation>
    <scope>GENOME REANNOTATION</scope>
    <source>
        <strain>cv. Columbia</strain>
    </source>
</reference>
<reference key="4">
    <citation type="journal article" date="2003" name="Science">
        <title>Empirical analysis of transcriptional activity in the Arabidopsis genome.</title>
        <authorList>
            <person name="Yamada K."/>
            <person name="Lim J."/>
            <person name="Dale J.M."/>
            <person name="Chen H."/>
            <person name="Shinn P."/>
            <person name="Palm C.J."/>
            <person name="Southwick A.M."/>
            <person name="Wu H.C."/>
            <person name="Kim C.J."/>
            <person name="Nguyen M."/>
            <person name="Pham P.K."/>
            <person name="Cheuk R.F."/>
            <person name="Karlin-Newmann G."/>
            <person name="Liu S.X."/>
            <person name="Lam B."/>
            <person name="Sakano H."/>
            <person name="Wu T."/>
            <person name="Yu G."/>
            <person name="Miranda M."/>
            <person name="Quach H.L."/>
            <person name="Tripp M."/>
            <person name="Chang C.H."/>
            <person name="Lee J.M."/>
            <person name="Toriumi M.J."/>
            <person name="Chan M.M."/>
            <person name="Tang C.C."/>
            <person name="Onodera C.S."/>
            <person name="Deng J.M."/>
            <person name="Akiyama K."/>
            <person name="Ansari Y."/>
            <person name="Arakawa T."/>
            <person name="Banh J."/>
            <person name="Banno F."/>
            <person name="Bowser L."/>
            <person name="Brooks S.Y."/>
            <person name="Carninci P."/>
            <person name="Chao Q."/>
            <person name="Choy N."/>
            <person name="Enju A."/>
            <person name="Goldsmith A.D."/>
            <person name="Gurjal M."/>
            <person name="Hansen N.F."/>
            <person name="Hayashizaki Y."/>
            <person name="Johnson-Hopson C."/>
            <person name="Hsuan V.W."/>
            <person name="Iida K."/>
            <person name="Karnes M."/>
            <person name="Khan S."/>
            <person name="Koesema E."/>
            <person name="Ishida J."/>
            <person name="Jiang P.X."/>
            <person name="Jones T."/>
            <person name="Kawai J."/>
            <person name="Kamiya A."/>
            <person name="Meyers C."/>
            <person name="Nakajima M."/>
            <person name="Narusaka M."/>
            <person name="Seki M."/>
            <person name="Sakurai T."/>
            <person name="Satou M."/>
            <person name="Tamse R."/>
            <person name="Vaysberg M."/>
            <person name="Wallender E.K."/>
            <person name="Wong C."/>
            <person name="Yamamura Y."/>
            <person name="Yuan S."/>
            <person name="Shinozaki K."/>
            <person name="Davis R.W."/>
            <person name="Theologis A."/>
            <person name="Ecker J.R."/>
        </authorList>
    </citation>
    <scope>NUCLEOTIDE SEQUENCE [LARGE SCALE MRNA]</scope>
    <source>
        <strain>cv. Columbia</strain>
    </source>
</reference>
<name>SPNS2_ARATH</name>
<feature type="chain" id="PRO_0000415370" description="Probable sphingolipid transporter spinster homolog 2">
    <location>
        <begin position="1"/>
        <end position="484"/>
    </location>
</feature>
<feature type="transmembrane region" description="Helical" evidence="3">
    <location>
        <begin position="38"/>
        <end position="58"/>
    </location>
</feature>
<feature type="transmembrane region" description="Helical" evidence="3">
    <location>
        <begin position="93"/>
        <end position="113"/>
    </location>
</feature>
<feature type="transmembrane region" description="Helical" evidence="3">
    <location>
        <begin position="122"/>
        <end position="142"/>
    </location>
</feature>
<feature type="transmembrane region" description="Helical" evidence="3">
    <location>
        <begin position="147"/>
        <end position="167"/>
    </location>
</feature>
<feature type="transmembrane region" description="Helical" evidence="3">
    <location>
        <begin position="181"/>
        <end position="201"/>
    </location>
</feature>
<feature type="transmembrane region" description="Helical" evidence="3">
    <location>
        <begin position="209"/>
        <end position="229"/>
    </location>
</feature>
<feature type="transmembrane region" description="Helical" evidence="3">
    <location>
        <begin position="273"/>
        <end position="293"/>
    </location>
</feature>
<feature type="transmembrane region" description="Helical" evidence="3">
    <location>
        <begin position="311"/>
        <end position="331"/>
    </location>
</feature>
<feature type="transmembrane region" description="Helical" evidence="3">
    <location>
        <begin position="345"/>
        <end position="362"/>
    </location>
</feature>
<feature type="transmembrane region" description="Helical" evidence="3">
    <location>
        <begin position="377"/>
        <end position="397"/>
    </location>
</feature>
<feature type="transmembrane region" description="Helical" evidence="3">
    <location>
        <begin position="405"/>
        <end position="425"/>
    </location>
</feature>
<feature type="transmembrane region" description="Helical" evidence="3">
    <location>
        <begin position="436"/>
        <end position="456"/>
    </location>
</feature>
<feature type="region of interest" description="Disordered" evidence="4">
    <location>
        <begin position="1"/>
        <end position="23"/>
    </location>
</feature>
<feature type="modified residue" description="Phosphoserine" evidence="2">
    <location>
        <position position="466"/>
    </location>
</feature>
<feature type="glycosylation site" description="N-linked (GlcNAc...) asparagine" evidence="3">
    <location>
        <position position="62"/>
    </location>
</feature>
<feature type="glycosylation site" description="N-linked (GlcNAc...) asparagine" evidence="3">
    <location>
        <position position="85"/>
    </location>
</feature>
<proteinExistence type="evidence at transcript level"/>
<gene>
    <name type="ordered locus">At5g64500</name>
    <name type="ORF">T12B11.9</name>
</gene>
<keyword id="KW-0967">Endosome</keyword>
<keyword id="KW-0325">Glycoprotein</keyword>
<keyword id="KW-0445">Lipid transport</keyword>
<keyword id="KW-0458">Lysosome</keyword>
<keyword id="KW-0472">Membrane</keyword>
<keyword id="KW-0597">Phosphoprotein</keyword>
<keyword id="KW-1185">Reference proteome</keyword>
<keyword id="KW-0812">Transmembrane</keyword>
<keyword id="KW-1133">Transmembrane helix</keyword>
<keyword id="KW-0813">Transport</keyword>
<dbReference type="EMBL" id="AB010076">
    <property type="protein sequence ID" value="BAB11417.1"/>
    <property type="molecule type" value="Genomic_DNA"/>
</dbReference>
<dbReference type="EMBL" id="AB025640">
    <property type="protein sequence ID" value="BAB11417.1"/>
    <property type="status" value="JOINED"/>
    <property type="molecule type" value="Genomic_DNA"/>
</dbReference>
<dbReference type="EMBL" id="CP002688">
    <property type="protein sequence ID" value="AED97908.1"/>
    <property type="molecule type" value="Genomic_DNA"/>
</dbReference>
<dbReference type="EMBL" id="AY034956">
    <property type="protein sequence ID" value="AAK59462.1"/>
    <property type="molecule type" value="mRNA"/>
</dbReference>
<dbReference type="EMBL" id="BT001973">
    <property type="protein sequence ID" value="AAN71972.1"/>
    <property type="molecule type" value="mRNA"/>
</dbReference>
<dbReference type="RefSeq" id="NP_201255.1">
    <property type="nucleotide sequence ID" value="NM_125846.3"/>
</dbReference>
<dbReference type="SMR" id="Q9FLG8"/>
<dbReference type="FunCoup" id="Q9FLG8">
    <property type="interactions" value="3902"/>
</dbReference>
<dbReference type="STRING" id="3702.Q9FLG8"/>
<dbReference type="GlyGen" id="Q9FLG8">
    <property type="glycosylation" value="2 sites"/>
</dbReference>
<dbReference type="iPTMnet" id="Q9FLG8"/>
<dbReference type="PaxDb" id="3702-AT5G64500.1"/>
<dbReference type="ProteomicsDB" id="228371"/>
<dbReference type="EnsemblPlants" id="AT5G64500.1">
    <property type="protein sequence ID" value="AT5G64500.1"/>
    <property type="gene ID" value="AT5G64500"/>
</dbReference>
<dbReference type="GeneID" id="836571"/>
<dbReference type="Gramene" id="AT5G64500.1">
    <property type="protein sequence ID" value="AT5G64500.1"/>
    <property type="gene ID" value="AT5G64500"/>
</dbReference>
<dbReference type="KEGG" id="ath:AT5G64500"/>
<dbReference type="Araport" id="AT5G64500"/>
<dbReference type="TAIR" id="AT5G64500"/>
<dbReference type="eggNOG" id="KOG1330">
    <property type="taxonomic scope" value="Eukaryota"/>
</dbReference>
<dbReference type="HOGENOM" id="CLU_001265_55_3_1"/>
<dbReference type="InParanoid" id="Q9FLG8"/>
<dbReference type="OMA" id="YICAAGL"/>
<dbReference type="OrthoDB" id="6770063at2759"/>
<dbReference type="PhylomeDB" id="Q9FLG8"/>
<dbReference type="PRO" id="PR:Q9FLG8"/>
<dbReference type="Proteomes" id="UP000006548">
    <property type="component" value="Chromosome 5"/>
</dbReference>
<dbReference type="ExpressionAtlas" id="Q9FLG8">
    <property type="expression patterns" value="baseline and differential"/>
</dbReference>
<dbReference type="GO" id="GO:0031902">
    <property type="term" value="C:late endosome membrane"/>
    <property type="evidence" value="ECO:0007669"/>
    <property type="project" value="UniProtKB-SubCell"/>
</dbReference>
<dbReference type="GO" id="GO:0005765">
    <property type="term" value="C:lysosomal membrane"/>
    <property type="evidence" value="ECO:0007669"/>
    <property type="project" value="UniProtKB-SubCell"/>
</dbReference>
<dbReference type="GO" id="GO:0022857">
    <property type="term" value="F:transmembrane transporter activity"/>
    <property type="evidence" value="ECO:0007669"/>
    <property type="project" value="InterPro"/>
</dbReference>
<dbReference type="GO" id="GO:0006869">
    <property type="term" value="P:lipid transport"/>
    <property type="evidence" value="ECO:0007669"/>
    <property type="project" value="UniProtKB-KW"/>
</dbReference>
<dbReference type="CDD" id="cd17328">
    <property type="entry name" value="MFS_spinster_like"/>
    <property type="match status" value="1"/>
</dbReference>
<dbReference type="Gene3D" id="1.20.1250.20">
    <property type="entry name" value="MFS general substrate transporter like domains"/>
    <property type="match status" value="1"/>
</dbReference>
<dbReference type="InterPro" id="IPR011701">
    <property type="entry name" value="MFS"/>
</dbReference>
<dbReference type="InterPro" id="IPR020846">
    <property type="entry name" value="MFS_dom"/>
</dbReference>
<dbReference type="InterPro" id="IPR044770">
    <property type="entry name" value="MFS_spinster-like"/>
</dbReference>
<dbReference type="InterPro" id="IPR036259">
    <property type="entry name" value="MFS_trans_sf"/>
</dbReference>
<dbReference type="PANTHER" id="PTHR23505:SF83">
    <property type="entry name" value="SPHINGOLIPID TRANSPORTER SPINSTER HOMOLOG 2-RELATED"/>
    <property type="match status" value="1"/>
</dbReference>
<dbReference type="PANTHER" id="PTHR23505">
    <property type="entry name" value="SPINSTER"/>
    <property type="match status" value="1"/>
</dbReference>
<dbReference type="Pfam" id="PF07690">
    <property type="entry name" value="MFS_1"/>
    <property type="match status" value="1"/>
</dbReference>
<dbReference type="SUPFAM" id="SSF103473">
    <property type="entry name" value="MFS general substrate transporter"/>
    <property type="match status" value="1"/>
</dbReference>
<dbReference type="PROSITE" id="PS50850">
    <property type="entry name" value="MFS"/>
    <property type="match status" value="1"/>
</dbReference>
<evidence type="ECO:0000250" key="1"/>
<evidence type="ECO:0000250" key="2">
    <source>
        <dbReference type="UniProtKB" id="Q6NMN6"/>
    </source>
</evidence>
<evidence type="ECO:0000255" key="3"/>
<evidence type="ECO:0000256" key="4">
    <source>
        <dbReference type="SAM" id="MobiDB-lite"/>
    </source>
</evidence>
<evidence type="ECO:0000305" key="5"/>